<proteinExistence type="inferred from homology"/>
<accession>P9WI54</accession>
<accession>L0TG18</accession>
<accession>O06379</accession>
<accession>P65746</accession>
<gene>
    <name evidence="1" type="primary">ppa</name>
    <name type="ordered locus">MT3730</name>
</gene>
<name>IPYR_MYCTO</name>
<organism>
    <name type="scientific">Mycobacterium tuberculosis (strain CDC 1551 / Oshkosh)</name>
    <dbReference type="NCBI Taxonomy" id="83331"/>
    <lineage>
        <taxon>Bacteria</taxon>
        <taxon>Bacillati</taxon>
        <taxon>Actinomycetota</taxon>
        <taxon>Actinomycetes</taxon>
        <taxon>Mycobacteriales</taxon>
        <taxon>Mycobacteriaceae</taxon>
        <taxon>Mycobacterium</taxon>
        <taxon>Mycobacterium tuberculosis complex</taxon>
    </lineage>
</organism>
<protein>
    <recommendedName>
        <fullName evidence="1">Inorganic pyrophosphatase</fullName>
        <ecNumber evidence="1">3.6.1.1</ecNumber>
    </recommendedName>
    <alternativeName>
        <fullName evidence="1">Pyrophosphate phospho-hydrolase</fullName>
        <shortName evidence="1">PPase</shortName>
    </alternativeName>
</protein>
<evidence type="ECO:0000255" key="1">
    <source>
        <dbReference type="HAMAP-Rule" id="MF_00209"/>
    </source>
</evidence>
<dbReference type="EC" id="3.6.1.1" evidence="1"/>
<dbReference type="EMBL" id="AE000516">
    <property type="protein sequence ID" value="AAK48091.1"/>
    <property type="molecule type" value="Genomic_DNA"/>
</dbReference>
<dbReference type="PIR" id="E70561">
    <property type="entry name" value="E70561"/>
</dbReference>
<dbReference type="RefSeq" id="WP_003419577.1">
    <property type="nucleotide sequence ID" value="NZ_KK341227.1"/>
</dbReference>
<dbReference type="SMR" id="P9WI54"/>
<dbReference type="KEGG" id="mtc:MT3730"/>
<dbReference type="PATRIC" id="fig|83331.31.peg.4014"/>
<dbReference type="HOGENOM" id="CLU_073198_1_1_11"/>
<dbReference type="Proteomes" id="UP000001020">
    <property type="component" value="Chromosome"/>
</dbReference>
<dbReference type="GO" id="GO:0005737">
    <property type="term" value="C:cytoplasm"/>
    <property type="evidence" value="ECO:0007669"/>
    <property type="project" value="UniProtKB-SubCell"/>
</dbReference>
<dbReference type="GO" id="GO:0004427">
    <property type="term" value="F:inorganic diphosphate phosphatase activity"/>
    <property type="evidence" value="ECO:0007669"/>
    <property type="project" value="UniProtKB-UniRule"/>
</dbReference>
<dbReference type="GO" id="GO:0000287">
    <property type="term" value="F:magnesium ion binding"/>
    <property type="evidence" value="ECO:0007669"/>
    <property type="project" value="UniProtKB-UniRule"/>
</dbReference>
<dbReference type="GO" id="GO:0006796">
    <property type="term" value="P:phosphate-containing compound metabolic process"/>
    <property type="evidence" value="ECO:0007669"/>
    <property type="project" value="InterPro"/>
</dbReference>
<dbReference type="CDD" id="cd00412">
    <property type="entry name" value="pyrophosphatase"/>
    <property type="match status" value="1"/>
</dbReference>
<dbReference type="FunFam" id="3.90.80.10:FF:000003">
    <property type="entry name" value="Inorganic pyrophosphatase"/>
    <property type="match status" value="1"/>
</dbReference>
<dbReference type="Gene3D" id="3.90.80.10">
    <property type="entry name" value="Inorganic pyrophosphatase"/>
    <property type="match status" value="1"/>
</dbReference>
<dbReference type="HAMAP" id="MF_00209">
    <property type="entry name" value="Inorganic_PPase"/>
    <property type="match status" value="1"/>
</dbReference>
<dbReference type="InterPro" id="IPR008162">
    <property type="entry name" value="Pyrophosphatase"/>
</dbReference>
<dbReference type="InterPro" id="IPR036649">
    <property type="entry name" value="Pyrophosphatase_sf"/>
</dbReference>
<dbReference type="PANTHER" id="PTHR10286">
    <property type="entry name" value="INORGANIC PYROPHOSPHATASE"/>
    <property type="match status" value="1"/>
</dbReference>
<dbReference type="Pfam" id="PF00719">
    <property type="entry name" value="Pyrophosphatase"/>
    <property type="match status" value="1"/>
</dbReference>
<dbReference type="SUPFAM" id="SSF50324">
    <property type="entry name" value="Inorganic pyrophosphatase"/>
    <property type="match status" value="1"/>
</dbReference>
<dbReference type="PROSITE" id="PS00387">
    <property type="entry name" value="PPASE"/>
    <property type="match status" value="1"/>
</dbReference>
<sequence length="162" mass="18329">MQFDVTIEIPKGQRNKYEVDHETGRVRLDRYLYTPMAYPTDYGFIEDTLGDDGDPLDALVLLPQPVFPGVLVAARPVGMFRMVDEHGGDDKVLCVPAGDPRWDHVQDIGDVPAFELDAIKHFFVHYKDLEPGKFVKAADWVDRAEAEAEVQRSVERFKAGTH</sequence>
<comment type="function">
    <text evidence="1">Catalyzes the hydrolysis of inorganic pyrophosphate (PPi) forming two phosphate ions.</text>
</comment>
<comment type="catalytic activity">
    <reaction evidence="1">
        <text>diphosphate + H2O = 2 phosphate + H(+)</text>
        <dbReference type="Rhea" id="RHEA:24576"/>
        <dbReference type="ChEBI" id="CHEBI:15377"/>
        <dbReference type="ChEBI" id="CHEBI:15378"/>
        <dbReference type="ChEBI" id="CHEBI:33019"/>
        <dbReference type="ChEBI" id="CHEBI:43474"/>
        <dbReference type="EC" id="3.6.1.1"/>
    </reaction>
</comment>
<comment type="cofactor">
    <cofactor evidence="1">
        <name>Mg(2+)</name>
        <dbReference type="ChEBI" id="CHEBI:18420"/>
    </cofactor>
</comment>
<comment type="subunit">
    <text evidence="1">Homohexamer.</text>
</comment>
<comment type="subcellular location">
    <subcellularLocation>
        <location evidence="1">Cytoplasm</location>
    </subcellularLocation>
</comment>
<comment type="similarity">
    <text evidence="1">Belongs to the PPase family.</text>
</comment>
<feature type="chain" id="PRO_0000428066" description="Inorganic pyrophosphatase">
    <location>
        <begin position="1"/>
        <end position="162"/>
    </location>
</feature>
<feature type="active site" description="Proton acceptor" evidence="1">
    <location>
        <position position="89"/>
    </location>
</feature>
<feature type="binding site" evidence="1">
    <location>
        <position position="8"/>
    </location>
    <ligand>
        <name>Mg(2+)</name>
        <dbReference type="ChEBI" id="CHEBI:18420"/>
        <label>2</label>
    </ligand>
</feature>
<feature type="binding site" evidence="1">
    <location>
        <position position="16"/>
    </location>
    <ligand>
        <name>substrate</name>
    </ligand>
</feature>
<feature type="binding site" evidence="1">
    <location>
        <position position="30"/>
    </location>
    <ligand>
        <name>substrate</name>
    </ligand>
</feature>
<feature type="binding site" evidence="1">
    <location>
        <position position="42"/>
    </location>
    <ligand>
        <name>substrate</name>
    </ligand>
</feature>
<feature type="binding site" evidence="1">
    <location>
        <position position="52"/>
    </location>
    <ligand>
        <name>Mg(2+)</name>
        <dbReference type="ChEBI" id="CHEBI:18420"/>
        <label>1</label>
    </ligand>
</feature>
<feature type="binding site" evidence="1">
    <location>
        <position position="57"/>
    </location>
    <ligand>
        <name>Mg(2+)</name>
        <dbReference type="ChEBI" id="CHEBI:18420"/>
        <label>1</label>
    </ligand>
</feature>
<feature type="binding site" evidence="1">
    <location>
        <position position="57"/>
    </location>
    <ligand>
        <name>Mg(2+)</name>
        <dbReference type="ChEBI" id="CHEBI:18420"/>
        <label>2</label>
    </ligand>
</feature>
<feature type="binding site" evidence="1">
    <location>
        <position position="84"/>
    </location>
    <ligand>
        <name>Mg(2+)</name>
        <dbReference type="ChEBI" id="CHEBI:18420"/>
        <label>3</label>
    </ligand>
</feature>
<feature type="binding site" evidence="1">
    <location>
        <position position="89"/>
    </location>
    <ligand>
        <name>Mg(2+)</name>
        <dbReference type="ChEBI" id="CHEBI:18420"/>
        <label>1</label>
    </ligand>
</feature>
<feature type="binding site" evidence="1">
    <location>
        <position position="89"/>
    </location>
    <ligand>
        <name>Mg(2+)</name>
        <dbReference type="ChEBI" id="CHEBI:18420"/>
        <label>3</label>
    </ligand>
</feature>
<feature type="binding site" evidence="1">
    <location>
        <position position="126"/>
    </location>
    <ligand>
        <name>substrate</name>
    </ligand>
</feature>
<reference key="1">
    <citation type="journal article" date="2002" name="J. Bacteriol.">
        <title>Whole-genome comparison of Mycobacterium tuberculosis clinical and laboratory strains.</title>
        <authorList>
            <person name="Fleischmann R.D."/>
            <person name="Alland D."/>
            <person name="Eisen J.A."/>
            <person name="Carpenter L."/>
            <person name="White O."/>
            <person name="Peterson J.D."/>
            <person name="DeBoy R.T."/>
            <person name="Dodson R.J."/>
            <person name="Gwinn M.L."/>
            <person name="Haft D.H."/>
            <person name="Hickey E.K."/>
            <person name="Kolonay J.F."/>
            <person name="Nelson W.C."/>
            <person name="Umayam L.A."/>
            <person name="Ermolaeva M.D."/>
            <person name="Salzberg S.L."/>
            <person name="Delcher A."/>
            <person name="Utterback T.R."/>
            <person name="Weidman J.F."/>
            <person name="Khouri H.M."/>
            <person name="Gill J."/>
            <person name="Mikula A."/>
            <person name="Bishai W."/>
            <person name="Jacobs W.R. Jr."/>
            <person name="Venter J.C."/>
            <person name="Fraser C.M."/>
        </authorList>
    </citation>
    <scope>NUCLEOTIDE SEQUENCE [LARGE SCALE GENOMIC DNA]</scope>
    <source>
        <strain>CDC 1551 / Oshkosh</strain>
    </source>
</reference>
<keyword id="KW-0963">Cytoplasm</keyword>
<keyword id="KW-0378">Hydrolase</keyword>
<keyword id="KW-0460">Magnesium</keyword>
<keyword id="KW-0479">Metal-binding</keyword>
<keyword id="KW-1185">Reference proteome</keyword>